<comment type="function">
    <text evidence="1">Essential for recycling GMP and indirectly, cGMP.</text>
</comment>
<comment type="catalytic activity">
    <reaction evidence="1">
        <text>GMP + ATP = GDP + ADP</text>
        <dbReference type="Rhea" id="RHEA:20780"/>
        <dbReference type="ChEBI" id="CHEBI:30616"/>
        <dbReference type="ChEBI" id="CHEBI:58115"/>
        <dbReference type="ChEBI" id="CHEBI:58189"/>
        <dbReference type="ChEBI" id="CHEBI:456216"/>
        <dbReference type="EC" id="2.7.4.8"/>
    </reaction>
</comment>
<comment type="subcellular location">
    <subcellularLocation>
        <location evidence="1">Cytoplasm</location>
    </subcellularLocation>
</comment>
<comment type="similarity">
    <text evidence="1">Belongs to the guanylate kinase family.</text>
</comment>
<keyword id="KW-0067">ATP-binding</keyword>
<keyword id="KW-0963">Cytoplasm</keyword>
<keyword id="KW-0418">Kinase</keyword>
<keyword id="KW-0547">Nucleotide-binding</keyword>
<keyword id="KW-1185">Reference proteome</keyword>
<keyword id="KW-0808">Transferase</keyword>
<gene>
    <name evidence="1" type="primary">gmk</name>
    <name type="ordered locus">blr4088</name>
</gene>
<feature type="chain" id="PRO_0000170507" description="Guanylate kinase">
    <location>
        <begin position="1"/>
        <end position="219"/>
    </location>
</feature>
<feature type="domain" description="Guanylate kinase-like" evidence="1">
    <location>
        <begin position="15"/>
        <end position="194"/>
    </location>
</feature>
<feature type="binding site" evidence="1">
    <location>
        <begin position="22"/>
        <end position="29"/>
    </location>
    <ligand>
        <name>ATP</name>
        <dbReference type="ChEBI" id="CHEBI:30616"/>
    </ligand>
</feature>
<proteinExistence type="inferred from homology"/>
<sequence>MTTGGHGTDGVERRGLMFVLSSPSGAGKTTLSRLLIERMPGLRMSVSATTRPMRPGEVDGRDYLFVDKPRFEAMVRDDELLEWATVFDNRYGTPRAPVEAALSAGQDVLFDIDWQGTQQLREKARADVVSVFILPPSAGDLEKRLHSRAQDSDEVIRKRMSRASHEMSHWAEYDYIVINHDVDEAFAEVQSILKAERLKRERRIGLVGFVRGLQGQLQG</sequence>
<accession>Q89MV4</accession>
<dbReference type="EC" id="2.7.4.8" evidence="1"/>
<dbReference type="EMBL" id="BA000040">
    <property type="protein sequence ID" value="BAC49353.1"/>
    <property type="molecule type" value="Genomic_DNA"/>
</dbReference>
<dbReference type="RefSeq" id="NP_770728.1">
    <property type="nucleotide sequence ID" value="NC_004463.1"/>
</dbReference>
<dbReference type="RefSeq" id="WP_011086862.1">
    <property type="nucleotide sequence ID" value="NC_004463.1"/>
</dbReference>
<dbReference type="SMR" id="Q89MV4"/>
<dbReference type="FunCoup" id="Q89MV4">
    <property type="interactions" value="623"/>
</dbReference>
<dbReference type="STRING" id="224911.AAV28_17470"/>
<dbReference type="EnsemblBacteria" id="BAC49353">
    <property type="protein sequence ID" value="BAC49353"/>
    <property type="gene ID" value="BAC49353"/>
</dbReference>
<dbReference type="GeneID" id="46491092"/>
<dbReference type="KEGG" id="bja:blr4088"/>
<dbReference type="PATRIC" id="fig|224911.5.peg.4102"/>
<dbReference type="eggNOG" id="COG0194">
    <property type="taxonomic scope" value="Bacteria"/>
</dbReference>
<dbReference type="HOGENOM" id="CLU_001715_1_0_5"/>
<dbReference type="InParanoid" id="Q89MV4"/>
<dbReference type="OrthoDB" id="9808150at2"/>
<dbReference type="PhylomeDB" id="Q89MV4"/>
<dbReference type="Proteomes" id="UP000002526">
    <property type="component" value="Chromosome"/>
</dbReference>
<dbReference type="GO" id="GO:0005829">
    <property type="term" value="C:cytosol"/>
    <property type="evidence" value="ECO:0000318"/>
    <property type="project" value="GO_Central"/>
</dbReference>
<dbReference type="GO" id="GO:0005524">
    <property type="term" value="F:ATP binding"/>
    <property type="evidence" value="ECO:0007669"/>
    <property type="project" value="UniProtKB-UniRule"/>
</dbReference>
<dbReference type="GO" id="GO:0004385">
    <property type="term" value="F:guanylate kinase activity"/>
    <property type="evidence" value="ECO:0000318"/>
    <property type="project" value="GO_Central"/>
</dbReference>
<dbReference type="CDD" id="cd00071">
    <property type="entry name" value="GMPK"/>
    <property type="match status" value="1"/>
</dbReference>
<dbReference type="FunFam" id="3.40.50.300:FF:004197">
    <property type="entry name" value="Guanylate kinase"/>
    <property type="match status" value="1"/>
</dbReference>
<dbReference type="FunFam" id="3.30.63.10:FF:000002">
    <property type="entry name" value="Guanylate kinase 1"/>
    <property type="match status" value="1"/>
</dbReference>
<dbReference type="Gene3D" id="3.30.63.10">
    <property type="entry name" value="Guanylate Kinase phosphate binding domain"/>
    <property type="match status" value="1"/>
</dbReference>
<dbReference type="Gene3D" id="3.40.50.300">
    <property type="entry name" value="P-loop containing nucleotide triphosphate hydrolases"/>
    <property type="match status" value="1"/>
</dbReference>
<dbReference type="HAMAP" id="MF_00328">
    <property type="entry name" value="Guanylate_kinase"/>
    <property type="match status" value="1"/>
</dbReference>
<dbReference type="InterPro" id="IPR008145">
    <property type="entry name" value="GK/Ca_channel_bsu"/>
</dbReference>
<dbReference type="InterPro" id="IPR008144">
    <property type="entry name" value="Guanylate_kin-like_dom"/>
</dbReference>
<dbReference type="InterPro" id="IPR017665">
    <property type="entry name" value="Guanylate_kinase"/>
</dbReference>
<dbReference type="InterPro" id="IPR020590">
    <property type="entry name" value="Guanylate_kinase_CS"/>
</dbReference>
<dbReference type="InterPro" id="IPR027417">
    <property type="entry name" value="P-loop_NTPase"/>
</dbReference>
<dbReference type="NCBIfam" id="TIGR03263">
    <property type="entry name" value="guanyl_kin"/>
    <property type="match status" value="1"/>
</dbReference>
<dbReference type="PANTHER" id="PTHR23117:SF13">
    <property type="entry name" value="GUANYLATE KINASE"/>
    <property type="match status" value="1"/>
</dbReference>
<dbReference type="PANTHER" id="PTHR23117">
    <property type="entry name" value="GUANYLATE KINASE-RELATED"/>
    <property type="match status" value="1"/>
</dbReference>
<dbReference type="Pfam" id="PF00625">
    <property type="entry name" value="Guanylate_kin"/>
    <property type="match status" value="1"/>
</dbReference>
<dbReference type="SMART" id="SM00072">
    <property type="entry name" value="GuKc"/>
    <property type="match status" value="1"/>
</dbReference>
<dbReference type="SUPFAM" id="SSF52540">
    <property type="entry name" value="P-loop containing nucleoside triphosphate hydrolases"/>
    <property type="match status" value="1"/>
</dbReference>
<dbReference type="PROSITE" id="PS00856">
    <property type="entry name" value="GUANYLATE_KINASE_1"/>
    <property type="match status" value="1"/>
</dbReference>
<dbReference type="PROSITE" id="PS50052">
    <property type="entry name" value="GUANYLATE_KINASE_2"/>
    <property type="match status" value="1"/>
</dbReference>
<evidence type="ECO:0000255" key="1">
    <source>
        <dbReference type="HAMAP-Rule" id="MF_00328"/>
    </source>
</evidence>
<reference key="1">
    <citation type="journal article" date="2002" name="DNA Res.">
        <title>Complete genomic sequence of nitrogen-fixing symbiotic bacterium Bradyrhizobium japonicum USDA110.</title>
        <authorList>
            <person name="Kaneko T."/>
            <person name="Nakamura Y."/>
            <person name="Sato S."/>
            <person name="Minamisawa K."/>
            <person name="Uchiumi T."/>
            <person name="Sasamoto S."/>
            <person name="Watanabe A."/>
            <person name="Idesawa K."/>
            <person name="Iriguchi M."/>
            <person name="Kawashima K."/>
            <person name="Kohara M."/>
            <person name="Matsumoto M."/>
            <person name="Shimpo S."/>
            <person name="Tsuruoka H."/>
            <person name="Wada T."/>
            <person name="Yamada M."/>
            <person name="Tabata S."/>
        </authorList>
    </citation>
    <scope>NUCLEOTIDE SEQUENCE [LARGE SCALE GENOMIC DNA]</scope>
    <source>
        <strain>JCM 10833 / BCRC 13528 / IAM 13628 / NBRC 14792 / USDA 110</strain>
    </source>
</reference>
<protein>
    <recommendedName>
        <fullName evidence="1">Guanylate kinase</fullName>
        <ecNumber evidence="1">2.7.4.8</ecNumber>
    </recommendedName>
    <alternativeName>
        <fullName evidence="1">GMP kinase</fullName>
    </alternativeName>
</protein>
<organism>
    <name type="scientific">Bradyrhizobium diazoefficiens (strain JCM 10833 / BCRC 13528 / IAM 13628 / NBRC 14792 / USDA 110)</name>
    <dbReference type="NCBI Taxonomy" id="224911"/>
    <lineage>
        <taxon>Bacteria</taxon>
        <taxon>Pseudomonadati</taxon>
        <taxon>Pseudomonadota</taxon>
        <taxon>Alphaproteobacteria</taxon>
        <taxon>Hyphomicrobiales</taxon>
        <taxon>Nitrobacteraceae</taxon>
        <taxon>Bradyrhizobium</taxon>
    </lineage>
</organism>
<name>KGUA_BRADU</name>